<gene>
    <name type="primary">ssr1</name>
    <name type="ORF">DDB_G0283497</name>
</gene>
<protein>
    <recommendedName>
        <fullName>Translocon-associated protein subunit alpha</fullName>
        <shortName>TRAP-alpha</shortName>
    </recommendedName>
    <alternativeName>
        <fullName>Signal sequence receptor subunit alpha</fullName>
        <shortName>SSR-alpha</shortName>
    </alternativeName>
</protein>
<sequence length="236" mass="26252">MNKLITLLLAVLMIISCVYSDDVEITDDEVVQATPTSDVSFSYIFPDNQDKNFAAGSVVEVLVGFTNNADKALNITHIFASLNHPQDFSVFIQNYTRGDFGIAVEKGHHATLAYRFVPSEYLEPREFGLLISLEYQDGAQNFTQTFFNSTINITEKETSFDMDSFFLILLGLGFVGGIGYIVYGKMPKQKKVRTVSKVNKNAVRVETEDETAEWLSGTSAASSKVKSVQKVVKKNK</sequence>
<evidence type="ECO:0000250" key="1"/>
<evidence type="ECO:0000255" key="2"/>
<evidence type="ECO:0000305" key="3"/>
<proteinExistence type="inferred from homology"/>
<name>SSRA_DICDI</name>
<keyword id="KW-0106">Calcium</keyword>
<keyword id="KW-0256">Endoplasmic reticulum</keyword>
<keyword id="KW-0325">Glycoprotein</keyword>
<keyword id="KW-0472">Membrane</keyword>
<keyword id="KW-0597">Phosphoprotein</keyword>
<keyword id="KW-1185">Reference proteome</keyword>
<keyword id="KW-0732">Signal</keyword>
<keyword id="KW-0812">Transmembrane</keyword>
<keyword id="KW-1133">Transmembrane helix</keyword>
<reference key="1">
    <citation type="journal article" date="2005" name="Nature">
        <title>The genome of the social amoeba Dictyostelium discoideum.</title>
        <authorList>
            <person name="Eichinger L."/>
            <person name="Pachebat J.A."/>
            <person name="Gloeckner G."/>
            <person name="Rajandream M.A."/>
            <person name="Sucgang R."/>
            <person name="Berriman M."/>
            <person name="Song J."/>
            <person name="Olsen R."/>
            <person name="Szafranski K."/>
            <person name="Xu Q."/>
            <person name="Tunggal B."/>
            <person name="Kummerfeld S."/>
            <person name="Madera M."/>
            <person name="Konfortov B.A."/>
            <person name="Rivero F."/>
            <person name="Bankier A.T."/>
            <person name="Lehmann R."/>
            <person name="Hamlin N."/>
            <person name="Davies R."/>
            <person name="Gaudet P."/>
            <person name="Fey P."/>
            <person name="Pilcher K."/>
            <person name="Chen G."/>
            <person name="Saunders D."/>
            <person name="Sodergren E.J."/>
            <person name="Davis P."/>
            <person name="Kerhornou A."/>
            <person name="Nie X."/>
            <person name="Hall N."/>
            <person name="Anjard C."/>
            <person name="Hemphill L."/>
            <person name="Bason N."/>
            <person name="Farbrother P."/>
            <person name="Desany B."/>
            <person name="Just E."/>
            <person name="Morio T."/>
            <person name="Rost R."/>
            <person name="Churcher C.M."/>
            <person name="Cooper J."/>
            <person name="Haydock S."/>
            <person name="van Driessche N."/>
            <person name="Cronin A."/>
            <person name="Goodhead I."/>
            <person name="Muzny D.M."/>
            <person name="Mourier T."/>
            <person name="Pain A."/>
            <person name="Lu M."/>
            <person name="Harper D."/>
            <person name="Lindsay R."/>
            <person name="Hauser H."/>
            <person name="James K.D."/>
            <person name="Quiles M."/>
            <person name="Madan Babu M."/>
            <person name="Saito T."/>
            <person name="Buchrieser C."/>
            <person name="Wardroper A."/>
            <person name="Felder M."/>
            <person name="Thangavelu M."/>
            <person name="Johnson D."/>
            <person name="Knights A."/>
            <person name="Loulseged H."/>
            <person name="Mungall K.L."/>
            <person name="Oliver K."/>
            <person name="Price C."/>
            <person name="Quail M.A."/>
            <person name="Urushihara H."/>
            <person name="Hernandez J."/>
            <person name="Rabbinowitsch E."/>
            <person name="Steffen D."/>
            <person name="Sanders M."/>
            <person name="Ma J."/>
            <person name="Kohara Y."/>
            <person name="Sharp S."/>
            <person name="Simmonds M.N."/>
            <person name="Spiegler S."/>
            <person name="Tivey A."/>
            <person name="Sugano S."/>
            <person name="White B."/>
            <person name="Walker D."/>
            <person name="Woodward J.R."/>
            <person name="Winckler T."/>
            <person name="Tanaka Y."/>
            <person name="Shaulsky G."/>
            <person name="Schleicher M."/>
            <person name="Weinstock G.M."/>
            <person name="Rosenthal A."/>
            <person name="Cox E.C."/>
            <person name="Chisholm R.L."/>
            <person name="Gibbs R.A."/>
            <person name="Loomis W.F."/>
            <person name="Platzer M."/>
            <person name="Kay R.R."/>
            <person name="Williams J.G."/>
            <person name="Dear P.H."/>
            <person name="Noegel A.A."/>
            <person name="Barrell B.G."/>
            <person name="Kuspa A."/>
        </authorList>
    </citation>
    <scope>NUCLEOTIDE SEQUENCE [LARGE SCALE GENOMIC DNA]</scope>
    <source>
        <strain>AX4</strain>
    </source>
</reference>
<comment type="function">
    <text evidence="1">TRAP proteins are part of a complex whose function is to bind calcium to the ER membrane and thereby regulate the retention of ER resident proteins.</text>
</comment>
<comment type="subunit">
    <text evidence="3">Heterotrimer of TRAP-alpha, TRAP-beta and TRAP-gamma.</text>
</comment>
<comment type="subcellular location">
    <subcellularLocation>
        <location evidence="1">Endoplasmic reticulum membrane</location>
        <topology evidence="1">Single-pass type I membrane protein</topology>
    </subcellularLocation>
</comment>
<comment type="domain">
    <text evidence="1">Shows a remarkable charge distribution with the N-terminus being highly negatively charged, and the cytoplasmic C-terminus positively charged.</text>
</comment>
<comment type="PTM">
    <text evidence="1">Phosphorylated in its cytoplasmic tail.</text>
</comment>
<comment type="miscellaneous">
    <text evidence="1">Seems to bind calcium.</text>
</comment>
<comment type="similarity">
    <text evidence="3">Belongs to the TRAP-alpha family.</text>
</comment>
<dbReference type="EMBL" id="AAFI02000055">
    <property type="protein sequence ID" value="EAL65733.1"/>
    <property type="molecule type" value="Genomic_DNA"/>
</dbReference>
<dbReference type="RefSeq" id="XP_639046.1">
    <property type="nucleotide sequence ID" value="XM_633954.1"/>
</dbReference>
<dbReference type="SMR" id="Q54R45"/>
<dbReference type="FunCoup" id="Q54R45">
    <property type="interactions" value="671"/>
</dbReference>
<dbReference type="STRING" id="44689.Q54R45"/>
<dbReference type="GlyCosmos" id="Q54R45">
    <property type="glycosylation" value="5 sites, No reported glycans"/>
</dbReference>
<dbReference type="GlyGen" id="Q54R45">
    <property type="glycosylation" value="5 sites"/>
</dbReference>
<dbReference type="PaxDb" id="44689-DDB0266492"/>
<dbReference type="EnsemblProtists" id="EAL65733">
    <property type="protein sequence ID" value="EAL65733"/>
    <property type="gene ID" value="DDB_G0283497"/>
</dbReference>
<dbReference type="GeneID" id="8624071"/>
<dbReference type="KEGG" id="ddi:DDB_G0283497"/>
<dbReference type="dictyBase" id="DDB_G0283497">
    <property type="gene designation" value="ssr1"/>
</dbReference>
<dbReference type="VEuPathDB" id="AmoebaDB:DDB_G0283497"/>
<dbReference type="eggNOG" id="KOG1631">
    <property type="taxonomic scope" value="Eukaryota"/>
</dbReference>
<dbReference type="HOGENOM" id="CLU_073618_2_0_1"/>
<dbReference type="InParanoid" id="Q54R45"/>
<dbReference type="OMA" id="TFPYSFT"/>
<dbReference type="PhylomeDB" id="Q54R45"/>
<dbReference type="PRO" id="PR:Q54R45"/>
<dbReference type="Proteomes" id="UP000002195">
    <property type="component" value="Chromosome 4"/>
</dbReference>
<dbReference type="GO" id="GO:0005783">
    <property type="term" value="C:endoplasmic reticulum"/>
    <property type="evidence" value="ECO:0000318"/>
    <property type="project" value="GO_Central"/>
</dbReference>
<dbReference type="GO" id="GO:0005789">
    <property type="term" value="C:endoplasmic reticulum membrane"/>
    <property type="evidence" value="ECO:0007669"/>
    <property type="project" value="UniProtKB-SubCell"/>
</dbReference>
<dbReference type="GO" id="GO:0045335">
    <property type="term" value="C:phagocytic vesicle"/>
    <property type="evidence" value="ECO:0007005"/>
    <property type="project" value="dictyBase"/>
</dbReference>
<dbReference type="InterPro" id="IPR005595">
    <property type="entry name" value="TRAP_alpha"/>
</dbReference>
<dbReference type="PANTHER" id="PTHR12924:SF0">
    <property type="entry name" value="TRANSLOCON-ASSOCIATED PROTEIN SUBUNIT ALPHA"/>
    <property type="match status" value="1"/>
</dbReference>
<dbReference type="PANTHER" id="PTHR12924">
    <property type="entry name" value="TRANSLOCON-ASSOCIATED PROTEIN, ALPHA SUBUNIT"/>
    <property type="match status" value="1"/>
</dbReference>
<dbReference type="Pfam" id="PF03896">
    <property type="entry name" value="TRAP_alpha"/>
    <property type="match status" value="1"/>
</dbReference>
<accession>Q54R45</accession>
<organism>
    <name type="scientific">Dictyostelium discoideum</name>
    <name type="common">Social amoeba</name>
    <dbReference type="NCBI Taxonomy" id="44689"/>
    <lineage>
        <taxon>Eukaryota</taxon>
        <taxon>Amoebozoa</taxon>
        <taxon>Evosea</taxon>
        <taxon>Eumycetozoa</taxon>
        <taxon>Dictyostelia</taxon>
        <taxon>Dictyosteliales</taxon>
        <taxon>Dictyosteliaceae</taxon>
        <taxon>Dictyostelium</taxon>
    </lineage>
</organism>
<feature type="signal peptide" evidence="2">
    <location>
        <begin position="1"/>
        <end position="20"/>
    </location>
</feature>
<feature type="chain" id="PRO_0000330738" description="Translocon-associated protein subunit alpha">
    <location>
        <begin position="21"/>
        <end position="236"/>
    </location>
</feature>
<feature type="topological domain" description="Lumenal" evidence="2">
    <location>
        <begin position="21"/>
        <end position="163"/>
    </location>
</feature>
<feature type="transmembrane region" description="Helical" evidence="2">
    <location>
        <begin position="164"/>
        <end position="184"/>
    </location>
</feature>
<feature type="topological domain" description="Cytoplasmic" evidence="2">
    <location>
        <begin position="185"/>
        <end position="236"/>
    </location>
</feature>
<feature type="glycosylation site" description="N-linked (GlcNAc...) asparagine" evidence="2">
    <location>
        <position position="74"/>
    </location>
</feature>
<feature type="glycosylation site" description="N-linked (GlcNAc...) asparagine" evidence="2">
    <location>
        <position position="94"/>
    </location>
</feature>
<feature type="glycosylation site" description="N-linked (GlcNAc...) asparagine" evidence="2">
    <location>
        <position position="141"/>
    </location>
</feature>
<feature type="glycosylation site" description="N-linked (GlcNAc...) asparagine" evidence="2">
    <location>
        <position position="148"/>
    </location>
</feature>
<feature type="glycosylation site" description="N-linked (GlcNAc...) asparagine" evidence="2">
    <location>
        <position position="152"/>
    </location>
</feature>